<protein>
    <recommendedName>
        <fullName evidence="1">Ribonuclease PH</fullName>
        <shortName evidence="1">RNase PH</shortName>
        <ecNumber evidence="1">2.7.7.56</ecNumber>
    </recommendedName>
    <alternativeName>
        <fullName evidence="1">tRNA nucleotidyltransferase</fullName>
    </alternativeName>
</protein>
<sequence>MRPHHRLPDQMRELHIERAVNCHAEGSALITLGRTQVLCTASIEERVPPFLRGQNQGWVTAEYGMLPRATHERSTREAARGKQQGRTQEIQRLIGRSLRAVVDLSALGERSITLDCDVLQADGGTRTAAISGGFIALADAIRVLMQQGRLKANPLRGQLAAVSVGFYQGEALLDLEYCEDSAAETDMNIVMNDAGALIEIQGTAEGRAFSRQEMNALLDLAEKGISEIMAEQRRVLGL</sequence>
<keyword id="KW-0548">Nucleotidyltransferase</keyword>
<keyword id="KW-1185">Reference proteome</keyword>
<keyword id="KW-0694">RNA-binding</keyword>
<keyword id="KW-0698">rRNA processing</keyword>
<keyword id="KW-0808">Transferase</keyword>
<keyword id="KW-0819">tRNA processing</keyword>
<keyword id="KW-0820">tRNA-binding</keyword>
<accession>A5EV74</accession>
<gene>
    <name evidence="1" type="primary">rph</name>
    <name type="ordered locus">DNO_0664</name>
</gene>
<proteinExistence type="inferred from homology"/>
<evidence type="ECO:0000255" key="1">
    <source>
        <dbReference type="HAMAP-Rule" id="MF_00564"/>
    </source>
</evidence>
<reference key="1">
    <citation type="journal article" date="2007" name="Nat. Biotechnol.">
        <title>Genome sequence and identification of candidate vaccine antigens from the animal pathogen Dichelobacter nodosus.</title>
        <authorList>
            <person name="Myers G.S.A."/>
            <person name="Parker D."/>
            <person name="Al-Hasani K."/>
            <person name="Kennan R.M."/>
            <person name="Seemann T."/>
            <person name="Ren Q."/>
            <person name="Badger J.H."/>
            <person name="Selengut J.D."/>
            <person name="Deboy R.T."/>
            <person name="Tettelin H."/>
            <person name="Boyce J.D."/>
            <person name="McCarl V.P."/>
            <person name="Han X."/>
            <person name="Nelson W.C."/>
            <person name="Madupu R."/>
            <person name="Mohamoud Y."/>
            <person name="Holley T."/>
            <person name="Fedorova N."/>
            <person name="Khouri H."/>
            <person name="Bottomley S.P."/>
            <person name="Whittington R.J."/>
            <person name="Adler B."/>
            <person name="Songer J.G."/>
            <person name="Rood J.I."/>
            <person name="Paulsen I.T."/>
        </authorList>
    </citation>
    <scope>NUCLEOTIDE SEQUENCE [LARGE SCALE GENOMIC DNA]</scope>
    <source>
        <strain>VCS1703A</strain>
    </source>
</reference>
<organism>
    <name type="scientific">Dichelobacter nodosus (strain VCS1703A)</name>
    <dbReference type="NCBI Taxonomy" id="246195"/>
    <lineage>
        <taxon>Bacteria</taxon>
        <taxon>Pseudomonadati</taxon>
        <taxon>Pseudomonadota</taxon>
        <taxon>Gammaproteobacteria</taxon>
        <taxon>Cardiobacteriales</taxon>
        <taxon>Cardiobacteriaceae</taxon>
        <taxon>Dichelobacter</taxon>
    </lineage>
</organism>
<feature type="chain" id="PRO_1000024801" description="Ribonuclease PH">
    <location>
        <begin position="1"/>
        <end position="238"/>
    </location>
</feature>
<feature type="binding site" evidence="1">
    <location>
        <position position="86"/>
    </location>
    <ligand>
        <name>phosphate</name>
        <dbReference type="ChEBI" id="CHEBI:43474"/>
        <note>substrate</note>
    </ligand>
</feature>
<feature type="binding site" evidence="1">
    <location>
        <begin position="124"/>
        <end position="126"/>
    </location>
    <ligand>
        <name>phosphate</name>
        <dbReference type="ChEBI" id="CHEBI:43474"/>
        <note>substrate</note>
    </ligand>
</feature>
<name>RNPH_DICNV</name>
<comment type="function">
    <text evidence="1">Phosphorolytic 3'-5' exoribonuclease that plays an important role in tRNA 3'-end maturation. Removes nucleotide residues following the 3'-CCA terminus of tRNAs; can also add nucleotides to the ends of RNA molecules by using nucleoside diphosphates as substrates, but this may not be physiologically important. Probably plays a role in initiation of 16S rRNA degradation (leading to ribosome degradation) during starvation.</text>
</comment>
<comment type="catalytic activity">
    <reaction evidence="1">
        <text>tRNA(n+1) + phosphate = tRNA(n) + a ribonucleoside 5'-diphosphate</text>
        <dbReference type="Rhea" id="RHEA:10628"/>
        <dbReference type="Rhea" id="RHEA-COMP:17343"/>
        <dbReference type="Rhea" id="RHEA-COMP:17344"/>
        <dbReference type="ChEBI" id="CHEBI:43474"/>
        <dbReference type="ChEBI" id="CHEBI:57930"/>
        <dbReference type="ChEBI" id="CHEBI:173114"/>
        <dbReference type="EC" id="2.7.7.56"/>
    </reaction>
</comment>
<comment type="subunit">
    <text evidence="1">Homohexameric ring arranged as a trimer of dimers.</text>
</comment>
<comment type="similarity">
    <text evidence="1">Belongs to the RNase PH family.</text>
</comment>
<dbReference type="EC" id="2.7.7.56" evidence="1"/>
<dbReference type="EMBL" id="CP000513">
    <property type="protein sequence ID" value="ABQ13278.1"/>
    <property type="molecule type" value="Genomic_DNA"/>
</dbReference>
<dbReference type="RefSeq" id="WP_012030997.1">
    <property type="nucleotide sequence ID" value="NC_009446.1"/>
</dbReference>
<dbReference type="SMR" id="A5EV74"/>
<dbReference type="STRING" id="246195.DNO_0664"/>
<dbReference type="KEGG" id="dno:DNO_0664"/>
<dbReference type="eggNOG" id="COG0689">
    <property type="taxonomic scope" value="Bacteria"/>
</dbReference>
<dbReference type="HOGENOM" id="CLU_050858_0_0_6"/>
<dbReference type="OrthoDB" id="9802265at2"/>
<dbReference type="Proteomes" id="UP000000248">
    <property type="component" value="Chromosome"/>
</dbReference>
<dbReference type="GO" id="GO:0000175">
    <property type="term" value="F:3'-5'-RNA exonuclease activity"/>
    <property type="evidence" value="ECO:0007669"/>
    <property type="project" value="UniProtKB-UniRule"/>
</dbReference>
<dbReference type="GO" id="GO:0000049">
    <property type="term" value="F:tRNA binding"/>
    <property type="evidence" value="ECO:0007669"/>
    <property type="project" value="UniProtKB-UniRule"/>
</dbReference>
<dbReference type="GO" id="GO:0009022">
    <property type="term" value="F:tRNA nucleotidyltransferase activity"/>
    <property type="evidence" value="ECO:0007669"/>
    <property type="project" value="UniProtKB-UniRule"/>
</dbReference>
<dbReference type="GO" id="GO:0016075">
    <property type="term" value="P:rRNA catabolic process"/>
    <property type="evidence" value="ECO:0007669"/>
    <property type="project" value="UniProtKB-UniRule"/>
</dbReference>
<dbReference type="GO" id="GO:0006364">
    <property type="term" value="P:rRNA processing"/>
    <property type="evidence" value="ECO:0007669"/>
    <property type="project" value="UniProtKB-KW"/>
</dbReference>
<dbReference type="GO" id="GO:0008033">
    <property type="term" value="P:tRNA processing"/>
    <property type="evidence" value="ECO:0007669"/>
    <property type="project" value="UniProtKB-UniRule"/>
</dbReference>
<dbReference type="CDD" id="cd11362">
    <property type="entry name" value="RNase_PH_bact"/>
    <property type="match status" value="1"/>
</dbReference>
<dbReference type="FunFam" id="3.30.230.70:FF:000003">
    <property type="entry name" value="Ribonuclease PH"/>
    <property type="match status" value="1"/>
</dbReference>
<dbReference type="Gene3D" id="3.30.230.70">
    <property type="entry name" value="GHMP Kinase, N-terminal domain"/>
    <property type="match status" value="1"/>
</dbReference>
<dbReference type="HAMAP" id="MF_00564">
    <property type="entry name" value="RNase_PH"/>
    <property type="match status" value="1"/>
</dbReference>
<dbReference type="InterPro" id="IPR001247">
    <property type="entry name" value="ExoRNase_PH_dom1"/>
</dbReference>
<dbReference type="InterPro" id="IPR015847">
    <property type="entry name" value="ExoRNase_PH_dom2"/>
</dbReference>
<dbReference type="InterPro" id="IPR036345">
    <property type="entry name" value="ExoRNase_PH_dom2_sf"/>
</dbReference>
<dbReference type="InterPro" id="IPR027408">
    <property type="entry name" value="PNPase/RNase_PH_dom_sf"/>
</dbReference>
<dbReference type="InterPro" id="IPR020568">
    <property type="entry name" value="Ribosomal_Su5_D2-typ_SF"/>
</dbReference>
<dbReference type="InterPro" id="IPR050080">
    <property type="entry name" value="RNase_PH"/>
</dbReference>
<dbReference type="InterPro" id="IPR002381">
    <property type="entry name" value="RNase_PH_bac-type"/>
</dbReference>
<dbReference type="InterPro" id="IPR018336">
    <property type="entry name" value="RNase_PH_CS"/>
</dbReference>
<dbReference type="NCBIfam" id="TIGR01966">
    <property type="entry name" value="RNasePH"/>
    <property type="match status" value="1"/>
</dbReference>
<dbReference type="PANTHER" id="PTHR11953">
    <property type="entry name" value="EXOSOME COMPLEX COMPONENT"/>
    <property type="match status" value="1"/>
</dbReference>
<dbReference type="PANTHER" id="PTHR11953:SF0">
    <property type="entry name" value="EXOSOME COMPLEX COMPONENT RRP41"/>
    <property type="match status" value="1"/>
</dbReference>
<dbReference type="Pfam" id="PF01138">
    <property type="entry name" value="RNase_PH"/>
    <property type="match status" value="1"/>
</dbReference>
<dbReference type="Pfam" id="PF03725">
    <property type="entry name" value="RNase_PH_C"/>
    <property type="match status" value="1"/>
</dbReference>
<dbReference type="SUPFAM" id="SSF55666">
    <property type="entry name" value="Ribonuclease PH domain 2-like"/>
    <property type="match status" value="1"/>
</dbReference>
<dbReference type="SUPFAM" id="SSF54211">
    <property type="entry name" value="Ribosomal protein S5 domain 2-like"/>
    <property type="match status" value="1"/>
</dbReference>
<dbReference type="PROSITE" id="PS01277">
    <property type="entry name" value="RIBONUCLEASE_PH"/>
    <property type="match status" value="1"/>
</dbReference>